<sequence length="153" mass="15699">MVVKAVCVINGDAKGTVFFEQESSGTPVKVSGEVCGLAKGLHGFHVHEFGDNTNGCMSSGPHFNPYGKEHGAPVDENRHLGDLGNIEATGDCPTKVNITDSKITLFGADSIIGRTVVVHADADDLGQGGHELSKSTGNAGARIGCGVIGIAKV</sequence>
<name>SODC_DROME</name>
<keyword id="KW-0049">Antioxidant</keyword>
<keyword id="KW-0186">Copper</keyword>
<keyword id="KW-0963">Cytoplasm</keyword>
<keyword id="KW-0903">Direct protein sequencing</keyword>
<keyword id="KW-1015">Disulfide bond</keyword>
<keyword id="KW-0479">Metal-binding</keyword>
<keyword id="KW-0560">Oxidoreductase</keyword>
<keyword id="KW-0597">Phosphoprotein</keyword>
<keyword id="KW-1185">Reference proteome</keyword>
<keyword id="KW-0862">Zinc</keyword>
<organism>
    <name type="scientific">Drosophila melanogaster</name>
    <name type="common">Fruit fly</name>
    <dbReference type="NCBI Taxonomy" id="7227"/>
    <lineage>
        <taxon>Eukaryota</taxon>
        <taxon>Metazoa</taxon>
        <taxon>Ecdysozoa</taxon>
        <taxon>Arthropoda</taxon>
        <taxon>Hexapoda</taxon>
        <taxon>Insecta</taxon>
        <taxon>Pterygota</taxon>
        <taxon>Neoptera</taxon>
        <taxon>Endopterygota</taxon>
        <taxon>Diptera</taxon>
        <taxon>Brachycera</taxon>
        <taxon>Muscomorpha</taxon>
        <taxon>Ephydroidea</taxon>
        <taxon>Drosophilidae</taxon>
        <taxon>Drosophila</taxon>
        <taxon>Sophophora</taxon>
    </lineage>
</organism>
<accession>P61851</accession>
<accession>P00444</accession>
<accession>Q27770</accession>
<accession>Q9VTF6</accession>
<protein>
    <recommendedName>
        <fullName evidence="4">Superoxide dismutase [Cu-Zn]</fullName>
        <ecNumber>1.15.1.1</ecNumber>
    </recommendedName>
    <alternativeName>
        <fullName evidence="6">Superoxide dismutase 1</fullName>
    </alternativeName>
</protein>
<feature type="initiator methionine" description="Removed" evidence="2 3">
    <location>
        <position position="1"/>
    </location>
</feature>
<feature type="chain" id="PRO_0000164085" description="Superoxide dismutase [Cu-Zn]">
    <location>
        <begin position="2"/>
        <end position="153"/>
    </location>
</feature>
<feature type="binding site">
    <location>
        <position position="45"/>
    </location>
    <ligand>
        <name>Cu cation</name>
        <dbReference type="ChEBI" id="CHEBI:23378"/>
        <note>catalytic</note>
    </ligand>
</feature>
<feature type="binding site">
    <location>
        <position position="47"/>
    </location>
    <ligand>
        <name>Cu cation</name>
        <dbReference type="ChEBI" id="CHEBI:23378"/>
        <note>catalytic</note>
    </ligand>
</feature>
<feature type="binding site">
    <location>
        <position position="62"/>
    </location>
    <ligand>
        <name>Cu cation</name>
        <dbReference type="ChEBI" id="CHEBI:23378"/>
        <note>catalytic</note>
    </ligand>
</feature>
<feature type="binding site">
    <location>
        <position position="62"/>
    </location>
    <ligand>
        <name>Zn(2+)</name>
        <dbReference type="ChEBI" id="CHEBI:29105"/>
        <note>structural</note>
    </ligand>
</feature>
<feature type="binding site">
    <location>
        <position position="70"/>
    </location>
    <ligand>
        <name>Zn(2+)</name>
        <dbReference type="ChEBI" id="CHEBI:29105"/>
        <note>structural</note>
    </ligand>
</feature>
<feature type="binding site">
    <location>
        <position position="79"/>
    </location>
    <ligand>
        <name>Zn(2+)</name>
        <dbReference type="ChEBI" id="CHEBI:29105"/>
        <note>structural</note>
    </ligand>
</feature>
<feature type="binding site">
    <location>
        <position position="82"/>
    </location>
    <ligand>
        <name>Zn(2+)</name>
        <dbReference type="ChEBI" id="CHEBI:29105"/>
        <note>structural</note>
    </ligand>
</feature>
<feature type="binding site">
    <location>
        <position position="119"/>
    </location>
    <ligand>
        <name>Cu cation</name>
        <dbReference type="ChEBI" id="CHEBI:23378"/>
        <note>catalytic</note>
    </ligand>
</feature>
<feature type="modified residue" description="Phosphothreonine" evidence="1">
    <location>
        <position position="53"/>
    </location>
</feature>
<feature type="modified residue" description="Phosphoserine" evidence="1">
    <location>
        <position position="59"/>
    </location>
</feature>
<feature type="disulfide bond">
    <location>
        <begin position="56"/>
        <end position="145"/>
    </location>
</feature>
<feature type="sequence conflict" description="In Ref. 4; CAA35210, 11; AAD14963 and 12; AAA28905." evidence="5" ref="4 11 12">
    <original>N</original>
    <variation>K</variation>
    <location>
        <position position="97"/>
    </location>
</feature>
<dbReference type="EC" id="1.15.1.1"/>
<dbReference type="EMBL" id="Y00367">
    <property type="protein sequence ID" value="CAA68443.1"/>
    <property type="molecule type" value="mRNA"/>
</dbReference>
<dbReference type="EMBL" id="Z19591">
    <property type="protein sequence ID" value="CAA79639.1"/>
    <property type="molecule type" value="Genomic_DNA"/>
</dbReference>
<dbReference type="EMBL" id="M24421">
    <property type="protein sequence ID" value="AAA28906.1"/>
    <property type="molecule type" value="Genomic_DNA"/>
</dbReference>
<dbReference type="EMBL" id="X13780">
    <property type="protein sequence ID" value="CAA32028.1"/>
    <property type="molecule type" value="Genomic_DNA"/>
</dbReference>
<dbReference type="EMBL" id="X17332">
    <property type="protein sequence ID" value="CAA35210.1"/>
    <property type="molecule type" value="Genomic_DNA"/>
</dbReference>
<dbReference type="EMBL" id="AE014296">
    <property type="protein sequence ID" value="AAF50095.1"/>
    <property type="molecule type" value="Genomic_DNA"/>
</dbReference>
<dbReference type="EMBL" id="AY071435">
    <property type="protein sequence ID" value="AAL49057.1"/>
    <property type="molecule type" value="mRNA"/>
</dbReference>
<dbReference type="EMBL" id="S72589">
    <property type="protein sequence ID" value="AAD14963.2"/>
    <property type="molecule type" value="Genomic_DNA"/>
</dbReference>
<dbReference type="EMBL" id="M18823">
    <property type="protein sequence ID" value="AAA28905.1"/>
    <property type="molecule type" value="Genomic_DNA"/>
</dbReference>
<dbReference type="PIR" id="S02725">
    <property type="entry name" value="DSFFCZ"/>
</dbReference>
<dbReference type="RefSeq" id="NP_476735.1">
    <property type="nucleotide sequence ID" value="NM_057387.5"/>
</dbReference>
<dbReference type="SMR" id="P61851"/>
<dbReference type="BioGRID" id="64623">
    <property type="interactions" value="64"/>
</dbReference>
<dbReference type="FunCoup" id="P61851">
    <property type="interactions" value="1279"/>
</dbReference>
<dbReference type="IntAct" id="P61851">
    <property type="interactions" value="9"/>
</dbReference>
<dbReference type="STRING" id="7227.FBpp0075958"/>
<dbReference type="GlyGen" id="P61851">
    <property type="glycosylation" value="1 site, 1 O-linked glycan (1 site)"/>
</dbReference>
<dbReference type="iPTMnet" id="P61851"/>
<dbReference type="PaxDb" id="7227-FBpp0305736"/>
<dbReference type="DNASU" id="39251"/>
<dbReference type="EnsemblMetazoa" id="FBtr0076229">
    <property type="protein sequence ID" value="FBpp0075958"/>
    <property type="gene ID" value="FBgn0003462"/>
</dbReference>
<dbReference type="GeneID" id="39251"/>
<dbReference type="KEGG" id="dme:Dmel_CG11793"/>
<dbReference type="AGR" id="FB:FBgn0003462"/>
<dbReference type="CTD" id="6647"/>
<dbReference type="FlyBase" id="FBgn0003462">
    <property type="gene designation" value="Sod1"/>
</dbReference>
<dbReference type="VEuPathDB" id="VectorBase:FBgn0003462"/>
<dbReference type="eggNOG" id="KOG0441">
    <property type="taxonomic scope" value="Eukaryota"/>
</dbReference>
<dbReference type="GeneTree" id="ENSGT00940000155551"/>
<dbReference type="HOGENOM" id="CLU_056632_4_1_1"/>
<dbReference type="InParanoid" id="P61851"/>
<dbReference type="OMA" id="AQRGFHI"/>
<dbReference type="OrthoDB" id="2015551at2759"/>
<dbReference type="PhylomeDB" id="P61851"/>
<dbReference type="SignaLink" id="P61851"/>
<dbReference type="BioGRID-ORCS" id="39251">
    <property type="hits" value="1 hit in 1 CRISPR screen"/>
</dbReference>
<dbReference type="GenomeRNAi" id="39251"/>
<dbReference type="PRO" id="PR:P61851"/>
<dbReference type="Proteomes" id="UP000000803">
    <property type="component" value="Chromosome 3L"/>
</dbReference>
<dbReference type="Bgee" id="FBgn0003462">
    <property type="expression patterns" value="Expressed in adult class III enteroendocrine cell in adult midgut (Drosophila) and 275 other cell types or tissues"/>
</dbReference>
<dbReference type="ExpressionAtlas" id="P61851">
    <property type="expression patterns" value="baseline and differential"/>
</dbReference>
<dbReference type="GO" id="GO:0005737">
    <property type="term" value="C:cytoplasm"/>
    <property type="evidence" value="ECO:0000314"/>
    <property type="project" value="FlyBase"/>
</dbReference>
<dbReference type="GO" id="GO:0005758">
    <property type="term" value="C:mitochondrial intermembrane space"/>
    <property type="evidence" value="ECO:0000250"/>
    <property type="project" value="FlyBase"/>
</dbReference>
<dbReference type="GO" id="GO:0005777">
    <property type="term" value="C:peroxisome"/>
    <property type="evidence" value="ECO:0000314"/>
    <property type="project" value="FlyBase"/>
</dbReference>
<dbReference type="GO" id="GO:0005507">
    <property type="term" value="F:copper ion binding"/>
    <property type="evidence" value="ECO:0000318"/>
    <property type="project" value="GO_Central"/>
</dbReference>
<dbReference type="GO" id="GO:0042803">
    <property type="term" value="F:protein homodimerization activity"/>
    <property type="evidence" value="ECO:0000353"/>
    <property type="project" value="FlyBase"/>
</dbReference>
<dbReference type="GO" id="GO:0004784">
    <property type="term" value="F:superoxide dismutase activity"/>
    <property type="evidence" value="ECO:0000315"/>
    <property type="project" value="FlyBase"/>
</dbReference>
<dbReference type="GO" id="GO:0008340">
    <property type="term" value="P:determination of adult lifespan"/>
    <property type="evidence" value="ECO:0000315"/>
    <property type="project" value="FlyBase"/>
</dbReference>
<dbReference type="GO" id="GO:1901526">
    <property type="term" value="P:positive regulation of mitophagy"/>
    <property type="evidence" value="ECO:0000316"/>
    <property type="project" value="FlyBase"/>
</dbReference>
<dbReference type="GO" id="GO:0048167">
    <property type="term" value="P:regulation of synaptic plasticity"/>
    <property type="evidence" value="ECO:0000315"/>
    <property type="project" value="UniProtKB"/>
</dbReference>
<dbReference type="GO" id="GO:0019430">
    <property type="term" value="P:removal of superoxide radicals"/>
    <property type="evidence" value="ECO:0000318"/>
    <property type="project" value="GO_Central"/>
</dbReference>
<dbReference type="GO" id="GO:0006979">
    <property type="term" value="P:response to oxidative stress"/>
    <property type="evidence" value="ECO:0000315"/>
    <property type="project" value="FlyBase"/>
</dbReference>
<dbReference type="CDD" id="cd00305">
    <property type="entry name" value="Cu-Zn_Superoxide_Dismutase"/>
    <property type="match status" value="1"/>
</dbReference>
<dbReference type="FunFam" id="2.60.40.200:FF:000001">
    <property type="entry name" value="Superoxide dismutase [Cu-Zn]"/>
    <property type="match status" value="1"/>
</dbReference>
<dbReference type="Gene3D" id="2.60.40.200">
    <property type="entry name" value="Superoxide dismutase, copper/zinc binding domain"/>
    <property type="match status" value="1"/>
</dbReference>
<dbReference type="InterPro" id="IPR036423">
    <property type="entry name" value="SOD-like_Cu/Zn_dom_sf"/>
</dbReference>
<dbReference type="InterPro" id="IPR024134">
    <property type="entry name" value="SOD_Cu/Zn_/chaperone"/>
</dbReference>
<dbReference type="InterPro" id="IPR018152">
    <property type="entry name" value="SOD_Cu/Zn_BS"/>
</dbReference>
<dbReference type="InterPro" id="IPR001424">
    <property type="entry name" value="SOD_Cu_Zn_dom"/>
</dbReference>
<dbReference type="PANTHER" id="PTHR10003">
    <property type="entry name" value="SUPEROXIDE DISMUTASE CU-ZN -RELATED"/>
    <property type="match status" value="1"/>
</dbReference>
<dbReference type="Pfam" id="PF00080">
    <property type="entry name" value="Sod_Cu"/>
    <property type="match status" value="1"/>
</dbReference>
<dbReference type="PRINTS" id="PR00068">
    <property type="entry name" value="CUZNDISMTASE"/>
</dbReference>
<dbReference type="SUPFAM" id="SSF49329">
    <property type="entry name" value="Cu,Zn superoxide dismutase-like"/>
    <property type="match status" value="1"/>
</dbReference>
<dbReference type="PROSITE" id="PS00087">
    <property type="entry name" value="SOD_CU_ZN_1"/>
    <property type="match status" value="1"/>
</dbReference>
<dbReference type="PROSITE" id="PS00332">
    <property type="entry name" value="SOD_CU_ZN_2"/>
    <property type="match status" value="1"/>
</dbReference>
<comment type="function">
    <text>Destroys radicals which are normally produced within the cells and which are toxic to biological systems.</text>
</comment>
<comment type="catalytic activity">
    <reaction>
        <text>2 superoxide + 2 H(+) = H2O2 + O2</text>
        <dbReference type="Rhea" id="RHEA:20696"/>
        <dbReference type="ChEBI" id="CHEBI:15378"/>
        <dbReference type="ChEBI" id="CHEBI:15379"/>
        <dbReference type="ChEBI" id="CHEBI:16240"/>
        <dbReference type="ChEBI" id="CHEBI:18421"/>
        <dbReference type="EC" id="1.15.1.1"/>
    </reaction>
</comment>
<comment type="cofactor">
    <cofactor>
        <name>Cu cation</name>
        <dbReference type="ChEBI" id="CHEBI:23378"/>
    </cofactor>
    <text>Binds 1 copper ion per subunit.</text>
</comment>
<comment type="cofactor">
    <cofactor>
        <name>Zn(2+)</name>
        <dbReference type="ChEBI" id="CHEBI:29105"/>
    </cofactor>
    <text>Binds 1 zinc ion per subunit.</text>
</comment>
<comment type="subunit">
    <text>Homodimer.</text>
</comment>
<comment type="subcellular location">
    <subcellularLocation>
        <location>Cytoplasm</location>
    </subcellularLocation>
</comment>
<comment type="similarity">
    <text evidence="5">Belongs to the Cu-Zn superoxide dismutase family.</text>
</comment>
<evidence type="ECO:0000269" key="1">
    <source>
    </source>
</evidence>
<evidence type="ECO:0000269" key="2">
    <source>
    </source>
</evidence>
<evidence type="ECO:0000269" key="3">
    <source>
    </source>
</evidence>
<evidence type="ECO:0000303" key="4">
    <source>
    </source>
</evidence>
<evidence type="ECO:0000305" key="5"/>
<evidence type="ECO:0000312" key="6">
    <source>
        <dbReference type="FlyBase" id="FBgn0003462"/>
    </source>
</evidence>
<gene>
    <name evidence="6" type="primary">Sod1</name>
    <name evidence="4" type="synonym">Sod</name>
    <name evidence="6" type="ORF">CG11793</name>
</gene>
<proteinExistence type="evidence at protein level"/>
<reference key="1">
    <citation type="journal article" date="1987" name="Nucleic Acids Res.">
        <title>Drosophila Cu-Zn superoxide dismutase cDNA sequence.</title>
        <authorList>
            <person name="Seto N.O.L."/>
            <person name="Hayashi S."/>
            <person name="Tener G.M."/>
        </authorList>
    </citation>
    <scope>NUCLEOTIDE SEQUENCE [MRNA]</scope>
</reference>
<reference key="2">
    <citation type="journal article" date="1987" name="Nucleic Acids Res.">
        <title>The sequence of the Cu-Zn superoxide dismutase gene of Drosophila.</title>
        <authorList>
            <person name="Seto N.O.L."/>
            <person name="Hayashi S."/>
            <person name="Tener G.M."/>
        </authorList>
    </citation>
    <scope>NUCLEOTIDE SEQUENCE [GENOMIC DNA]</scope>
</reference>
<reference key="3">
    <citation type="journal article" date="1989" name="Gene">
        <title>Cloning, sequence analysis and chromosomal localization of the Cu-Zn superoxide dismutase gene of Drosophila melanogaster.</title>
        <authorList>
            <person name="Seto N.O."/>
            <person name="Hayashi S."/>
            <person name="Tener G.M."/>
        </authorList>
    </citation>
    <scope>NUCLEOTIDE SEQUENCE [GENOMIC DNA]</scope>
</reference>
<reference key="4">
    <citation type="journal article" date="1989" name="Nucleic Acids Res.">
        <title>Drosophila melanogaster Cu,Zn superoxide dismutase gene sequence.</title>
        <authorList>
            <person name="Kwiatowski J."/>
            <person name="Patel M."/>
            <person name="Ayala F.J."/>
        </authorList>
    </citation>
    <scope>NUCLEOTIDE SEQUENCE [GENOMIC DNA]</scope>
    <source>
        <strain>Canton-S</strain>
    </source>
</reference>
<reference key="5">
    <citation type="submission" date="1989-12" db="EMBL/GenBank/DDBJ databases">
        <authorList>
            <person name="Phillips J.P."/>
        </authorList>
    </citation>
    <scope>NUCLEOTIDE SEQUENCE</scope>
    <source>
        <strain>Canton-S</strain>
    </source>
</reference>
<reference key="6">
    <citation type="journal article" date="2000" name="Science">
        <title>The genome sequence of Drosophila melanogaster.</title>
        <authorList>
            <person name="Adams M.D."/>
            <person name="Celniker S.E."/>
            <person name="Holt R.A."/>
            <person name="Evans C.A."/>
            <person name="Gocayne J.D."/>
            <person name="Amanatides P.G."/>
            <person name="Scherer S.E."/>
            <person name="Li P.W."/>
            <person name="Hoskins R.A."/>
            <person name="Galle R.F."/>
            <person name="George R.A."/>
            <person name="Lewis S.E."/>
            <person name="Richards S."/>
            <person name="Ashburner M."/>
            <person name="Henderson S.N."/>
            <person name="Sutton G.G."/>
            <person name="Wortman J.R."/>
            <person name="Yandell M.D."/>
            <person name="Zhang Q."/>
            <person name="Chen L.X."/>
            <person name="Brandon R.C."/>
            <person name="Rogers Y.-H.C."/>
            <person name="Blazej R.G."/>
            <person name="Champe M."/>
            <person name="Pfeiffer B.D."/>
            <person name="Wan K.H."/>
            <person name="Doyle C."/>
            <person name="Baxter E.G."/>
            <person name="Helt G."/>
            <person name="Nelson C.R."/>
            <person name="Miklos G.L.G."/>
            <person name="Abril J.F."/>
            <person name="Agbayani A."/>
            <person name="An H.-J."/>
            <person name="Andrews-Pfannkoch C."/>
            <person name="Baldwin D."/>
            <person name="Ballew R.M."/>
            <person name="Basu A."/>
            <person name="Baxendale J."/>
            <person name="Bayraktaroglu L."/>
            <person name="Beasley E.M."/>
            <person name="Beeson K.Y."/>
            <person name="Benos P.V."/>
            <person name="Berman B.P."/>
            <person name="Bhandari D."/>
            <person name="Bolshakov S."/>
            <person name="Borkova D."/>
            <person name="Botchan M.R."/>
            <person name="Bouck J."/>
            <person name="Brokstein P."/>
            <person name="Brottier P."/>
            <person name="Burtis K.C."/>
            <person name="Busam D.A."/>
            <person name="Butler H."/>
            <person name="Cadieu E."/>
            <person name="Center A."/>
            <person name="Chandra I."/>
            <person name="Cherry J.M."/>
            <person name="Cawley S."/>
            <person name="Dahlke C."/>
            <person name="Davenport L.B."/>
            <person name="Davies P."/>
            <person name="de Pablos B."/>
            <person name="Delcher A."/>
            <person name="Deng Z."/>
            <person name="Mays A.D."/>
            <person name="Dew I."/>
            <person name="Dietz S.M."/>
            <person name="Dodson K."/>
            <person name="Doup L.E."/>
            <person name="Downes M."/>
            <person name="Dugan-Rocha S."/>
            <person name="Dunkov B.C."/>
            <person name="Dunn P."/>
            <person name="Durbin K.J."/>
            <person name="Evangelista C.C."/>
            <person name="Ferraz C."/>
            <person name="Ferriera S."/>
            <person name="Fleischmann W."/>
            <person name="Fosler C."/>
            <person name="Gabrielian A.E."/>
            <person name="Garg N.S."/>
            <person name="Gelbart W.M."/>
            <person name="Glasser K."/>
            <person name="Glodek A."/>
            <person name="Gong F."/>
            <person name="Gorrell J.H."/>
            <person name="Gu Z."/>
            <person name="Guan P."/>
            <person name="Harris M."/>
            <person name="Harris N.L."/>
            <person name="Harvey D.A."/>
            <person name="Heiman T.J."/>
            <person name="Hernandez J.R."/>
            <person name="Houck J."/>
            <person name="Hostin D."/>
            <person name="Houston K.A."/>
            <person name="Howland T.J."/>
            <person name="Wei M.-H."/>
            <person name="Ibegwam C."/>
            <person name="Jalali M."/>
            <person name="Kalush F."/>
            <person name="Karpen G.H."/>
            <person name="Ke Z."/>
            <person name="Kennison J.A."/>
            <person name="Ketchum K.A."/>
            <person name="Kimmel B.E."/>
            <person name="Kodira C.D."/>
            <person name="Kraft C.L."/>
            <person name="Kravitz S."/>
            <person name="Kulp D."/>
            <person name="Lai Z."/>
            <person name="Lasko P."/>
            <person name="Lei Y."/>
            <person name="Levitsky A.A."/>
            <person name="Li J.H."/>
            <person name="Li Z."/>
            <person name="Liang Y."/>
            <person name="Lin X."/>
            <person name="Liu X."/>
            <person name="Mattei B."/>
            <person name="McIntosh T.C."/>
            <person name="McLeod M.P."/>
            <person name="McPherson D."/>
            <person name="Merkulov G."/>
            <person name="Milshina N.V."/>
            <person name="Mobarry C."/>
            <person name="Morris J."/>
            <person name="Moshrefi A."/>
            <person name="Mount S.M."/>
            <person name="Moy M."/>
            <person name="Murphy B."/>
            <person name="Murphy L."/>
            <person name="Muzny D.M."/>
            <person name="Nelson D.L."/>
            <person name="Nelson D.R."/>
            <person name="Nelson K.A."/>
            <person name="Nixon K."/>
            <person name="Nusskern D.R."/>
            <person name="Pacleb J.M."/>
            <person name="Palazzolo M."/>
            <person name="Pittman G.S."/>
            <person name="Pan S."/>
            <person name="Pollard J."/>
            <person name="Puri V."/>
            <person name="Reese M.G."/>
            <person name="Reinert K."/>
            <person name="Remington K."/>
            <person name="Saunders R.D.C."/>
            <person name="Scheeler F."/>
            <person name="Shen H."/>
            <person name="Shue B.C."/>
            <person name="Siden-Kiamos I."/>
            <person name="Simpson M."/>
            <person name="Skupski M.P."/>
            <person name="Smith T.J."/>
            <person name="Spier E."/>
            <person name="Spradling A.C."/>
            <person name="Stapleton M."/>
            <person name="Strong R."/>
            <person name="Sun E."/>
            <person name="Svirskas R."/>
            <person name="Tector C."/>
            <person name="Turner R."/>
            <person name="Venter E."/>
            <person name="Wang A.H."/>
            <person name="Wang X."/>
            <person name="Wang Z.-Y."/>
            <person name="Wassarman D.A."/>
            <person name="Weinstock G.M."/>
            <person name="Weissenbach J."/>
            <person name="Williams S.M."/>
            <person name="Woodage T."/>
            <person name="Worley K.C."/>
            <person name="Wu D."/>
            <person name="Yang S."/>
            <person name="Yao Q.A."/>
            <person name="Ye J."/>
            <person name="Yeh R.-F."/>
            <person name="Zaveri J.S."/>
            <person name="Zhan M."/>
            <person name="Zhang G."/>
            <person name="Zhao Q."/>
            <person name="Zheng L."/>
            <person name="Zheng X.H."/>
            <person name="Zhong F.N."/>
            <person name="Zhong W."/>
            <person name="Zhou X."/>
            <person name="Zhu S.C."/>
            <person name="Zhu X."/>
            <person name="Smith H.O."/>
            <person name="Gibbs R.A."/>
            <person name="Myers E.W."/>
            <person name="Rubin G.M."/>
            <person name="Venter J.C."/>
        </authorList>
    </citation>
    <scope>NUCLEOTIDE SEQUENCE [LARGE SCALE GENOMIC DNA]</scope>
    <source>
        <strain>Berkeley</strain>
    </source>
</reference>
<reference key="7">
    <citation type="journal article" date="2002" name="Genome Biol.">
        <title>Annotation of the Drosophila melanogaster euchromatic genome: a systematic review.</title>
        <authorList>
            <person name="Misra S."/>
            <person name="Crosby M.A."/>
            <person name="Mungall C.J."/>
            <person name="Matthews B.B."/>
            <person name="Campbell K.S."/>
            <person name="Hradecky P."/>
            <person name="Huang Y."/>
            <person name="Kaminker J.S."/>
            <person name="Millburn G.H."/>
            <person name="Prochnik S.E."/>
            <person name="Smith C.D."/>
            <person name="Tupy J.L."/>
            <person name="Whitfield E.J."/>
            <person name="Bayraktaroglu L."/>
            <person name="Berman B.P."/>
            <person name="Bettencourt B.R."/>
            <person name="Celniker S.E."/>
            <person name="de Grey A.D.N.J."/>
            <person name="Drysdale R.A."/>
            <person name="Harris N.L."/>
            <person name="Richter J."/>
            <person name="Russo S."/>
            <person name="Schroeder A.J."/>
            <person name="Shu S.Q."/>
            <person name="Stapleton M."/>
            <person name="Yamada C."/>
            <person name="Ashburner M."/>
            <person name="Gelbart W.M."/>
            <person name="Rubin G.M."/>
            <person name="Lewis S.E."/>
        </authorList>
    </citation>
    <scope>GENOME REANNOTATION</scope>
    <source>
        <strain>Berkeley</strain>
    </source>
</reference>
<reference key="8">
    <citation type="journal article" date="2002" name="Genome Biol.">
        <title>A Drosophila full-length cDNA resource.</title>
        <authorList>
            <person name="Stapleton M."/>
            <person name="Carlson J.W."/>
            <person name="Brokstein P."/>
            <person name="Yu C."/>
            <person name="Champe M."/>
            <person name="George R.A."/>
            <person name="Guarin H."/>
            <person name="Kronmiller B."/>
            <person name="Pacleb J.M."/>
            <person name="Park S."/>
            <person name="Wan K.H."/>
            <person name="Rubin G.M."/>
            <person name="Celniker S.E."/>
        </authorList>
    </citation>
    <scope>NUCLEOTIDE SEQUENCE [LARGE SCALE MRNA]</scope>
    <source>
        <strain>Berkeley</strain>
        <tissue>Embryo</tissue>
    </source>
</reference>
<reference key="9">
    <citation type="journal article" date="1985" name="Proc. Natl. Acad. Sci. U.S.A.">
        <title>Superoxide dismutase: an evolutionary puzzle.</title>
        <authorList>
            <person name="Lee Y.M."/>
            <person name="Friedman D.J."/>
            <person name="Ayala F.J."/>
        </authorList>
    </citation>
    <scope>PROTEIN SEQUENCE OF 2-153</scope>
</reference>
<reference key="10">
    <citation type="journal article" date="1985" name="Arch. Biochem. Biophys.">
        <title>Complete amino acid sequence of copper-zinc superoxide dismutase from Drosophila melanogaster.</title>
        <authorList>
            <person name="Lee Y.M."/>
            <person name="Friedman D.J."/>
            <person name="Ayala F.J."/>
        </authorList>
    </citation>
    <scope>PROTEIN SEQUENCE OF 2-153</scope>
</reference>
<reference key="11">
    <citation type="journal article" date="1994" name="Genetics">
        <title>Evidence for positive selection in the superoxide dismutase (Sod) region of Drosophila melanogaster.</title>
        <authorList>
            <person name="Hudson R.R."/>
            <person name="Bailey K."/>
            <person name="Skarecky D."/>
            <person name="Kwiatowski J."/>
            <person name="Ayala F.J."/>
        </authorList>
    </citation>
    <scope>NUCLEOTIDE SEQUENCE [GENOMIC DNA] OF 8-153</scope>
</reference>
<reference key="12">
    <citation type="journal article" date="1987" name="Gene">
        <title>Isolation and chromosomal localization of genomic DNA sequences coding for cytoplasmic superoxide dismutase from Drosophila melanogaster.</title>
        <authorList>
            <person name="Kirkland K.C."/>
            <person name="Phillips J.P."/>
        </authorList>
    </citation>
    <scope>NUCLEOTIDE SEQUENCE [GENOMIC DNA] OF 91-122</scope>
    <source>
        <strain>Canton-S</strain>
    </source>
</reference>
<reference key="13">
    <citation type="journal article" date="2007" name="Mol. Biosyst.">
        <title>An integrated chemical, mass spectrometric and computational strategy for (quantitative) phosphoproteomics: application to Drosophila melanogaster Kc167 cells.</title>
        <authorList>
            <person name="Bodenmiller B."/>
            <person name="Mueller L.N."/>
            <person name="Pedrioli P.G.A."/>
            <person name="Pflieger D."/>
            <person name="Juenger M.A."/>
            <person name="Eng J.K."/>
            <person name="Aebersold R."/>
            <person name="Tao W.A."/>
        </authorList>
    </citation>
    <scope>PHOSPHORYLATION [LARGE SCALE ANALYSIS] AT THR-53 AND SER-59</scope>
    <scope>IDENTIFICATION BY MASS SPECTROMETRY</scope>
</reference>